<proteinExistence type="inferred from homology"/>
<organism>
    <name type="scientific">Cedrus deodara</name>
    <name type="common">Deodar cedar</name>
    <name type="synonym">Pinus deodara</name>
    <dbReference type="NCBI Taxonomy" id="3322"/>
    <lineage>
        <taxon>Eukaryota</taxon>
        <taxon>Viridiplantae</taxon>
        <taxon>Streptophyta</taxon>
        <taxon>Embryophyta</taxon>
        <taxon>Tracheophyta</taxon>
        <taxon>Spermatophyta</taxon>
        <taxon>Pinopsida</taxon>
        <taxon>Pinidae</taxon>
        <taxon>Conifers I</taxon>
        <taxon>Pinales</taxon>
        <taxon>Pinaceae</taxon>
        <taxon>Cedrus</taxon>
    </lineage>
</organism>
<comment type="function">
    <text evidence="1">One of the primary rRNA binding proteins, it binds directly to 16S rRNA where it nucleates assembly of the head domain of the 30S subunit.</text>
</comment>
<comment type="subunit">
    <text>Part of the 30S ribosomal subunit.</text>
</comment>
<comment type="subcellular location">
    <subcellularLocation>
        <location>Plastid</location>
        <location>Chloroplast</location>
    </subcellularLocation>
</comment>
<comment type="similarity">
    <text evidence="2">Belongs to the universal ribosomal protein uS7 family.</text>
</comment>
<protein>
    <recommendedName>
        <fullName evidence="2">Small ribosomal subunit protein uS7c</fullName>
    </recommendedName>
    <alternativeName>
        <fullName>30S ribosomal protein S7, chloroplastic</fullName>
    </alternativeName>
</protein>
<sequence>MSRRSTAEKKTAKSDPIYHNRLVNMVVNRILKNGKKSLAYRILYRAIKNIQQKTEKNPLSVLRQAIRRVTPNVTVKARRVGGSTYRVPVEIRSTQGKVLAIRWLLGASRKRPGRNMDFKLSHELMDAARGNGNAIRKKEETHRMAXANXAFAHFR</sequence>
<keyword id="KW-0150">Chloroplast</keyword>
<keyword id="KW-0934">Plastid</keyword>
<keyword id="KW-0687">Ribonucleoprotein</keyword>
<keyword id="KW-0689">Ribosomal protein</keyword>
<keyword id="KW-0694">RNA-binding</keyword>
<keyword id="KW-0699">rRNA-binding</keyword>
<reference key="1">
    <citation type="journal article" date="2003" name="Mol. Phylogenet. Evol.">
        <title>Inference of higher-order relationships in the cycads from a large chloroplast data set.</title>
        <authorList>
            <person name="Rai H.S."/>
            <person name="O'Brien H.E."/>
            <person name="Reeves P.A."/>
            <person name="Olmstead R.G."/>
            <person name="Graham S.W."/>
        </authorList>
    </citation>
    <scope>NUCLEOTIDE SEQUENCE [GENOMIC DNA]</scope>
</reference>
<feature type="chain" id="PRO_0000124439" description="Small ribosomal subunit protein uS7c">
    <location>
        <begin position="1"/>
        <end position="155"/>
    </location>
</feature>
<gene>
    <name type="primary">rps7</name>
</gene>
<accession>Q71L16</accession>
<name>RR7_CEDDE</name>
<dbReference type="EMBL" id="AF469739">
    <property type="protein sequence ID" value="AAQ05289.1"/>
    <property type="molecule type" value="Genomic_DNA"/>
</dbReference>
<dbReference type="GO" id="GO:0009507">
    <property type="term" value="C:chloroplast"/>
    <property type="evidence" value="ECO:0007669"/>
    <property type="project" value="UniProtKB-SubCell"/>
</dbReference>
<dbReference type="GO" id="GO:0015935">
    <property type="term" value="C:small ribosomal subunit"/>
    <property type="evidence" value="ECO:0007669"/>
    <property type="project" value="InterPro"/>
</dbReference>
<dbReference type="GO" id="GO:0019843">
    <property type="term" value="F:rRNA binding"/>
    <property type="evidence" value="ECO:0007669"/>
    <property type="project" value="UniProtKB-UniRule"/>
</dbReference>
<dbReference type="GO" id="GO:0003735">
    <property type="term" value="F:structural constituent of ribosome"/>
    <property type="evidence" value="ECO:0007669"/>
    <property type="project" value="InterPro"/>
</dbReference>
<dbReference type="GO" id="GO:0006412">
    <property type="term" value="P:translation"/>
    <property type="evidence" value="ECO:0007669"/>
    <property type="project" value="UniProtKB-UniRule"/>
</dbReference>
<dbReference type="CDD" id="cd14871">
    <property type="entry name" value="uS7_Chloroplast"/>
    <property type="match status" value="1"/>
</dbReference>
<dbReference type="FunFam" id="1.10.455.10:FF:000001">
    <property type="entry name" value="30S ribosomal protein S7"/>
    <property type="match status" value="1"/>
</dbReference>
<dbReference type="Gene3D" id="1.10.455.10">
    <property type="entry name" value="Ribosomal protein S7 domain"/>
    <property type="match status" value="1"/>
</dbReference>
<dbReference type="HAMAP" id="MF_00480_B">
    <property type="entry name" value="Ribosomal_uS7_B"/>
    <property type="match status" value="1"/>
</dbReference>
<dbReference type="InterPro" id="IPR000235">
    <property type="entry name" value="Ribosomal_uS7"/>
</dbReference>
<dbReference type="InterPro" id="IPR005717">
    <property type="entry name" value="Ribosomal_uS7_bac/org-type"/>
</dbReference>
<dbReference type="InterPro" id="IPR020606">
    <property type="entry name" value="Ribosomal_uS7_CS"/>
</dbReference>
<dbReference type="InterPro" id="IPR023798">
    <property type="entry name" value="Ribosomal_uS7_dom"/>
</dbReference>
<dbReference type="InterPro" id="IPR036823">
    <property type="entry name" value="Ribosomal_uS7_dom_sf"/>
</dbReference>
<dbReference type="NCBIfam" id="TIGR01029">
    <property type="entry name" value="rpsG_bact"/>
    <property type="match status" value="1"/>
</dbReference>
<dbReference type="PANTHER" id="PTHR11205">
    <property type="entry name" value="RIBOSOMAL PROTEIN S7"/>
    <property type="match status" value="1"/>
</dbReference>
<dbReference type="Pfam" id="PF00177">
    <property type="entry name" value="Ribosomal_S7"/>
    <property type="match status" value="1"/>
</dbReference>
<dbReference type="PIRSF" id="PIRSF002122">
    <property type="entry name" value="RPS7p_RPS7a_RPS5e_RPS7o"/>
    <property type="match status" value="1"/>
</dbReference>
<dbReference type="SUPFAM" id="SSF47973">
    <property type="entry name" value="Ribosomal protein S7"/>
    <property type="match status" value="1"/>
</dbReference>
<dbReference type="PROSITE" id="PS00052">
    <property type="entry name" value="RIBOSOMAL_S7"/>
    <property type="match status" value="1"/>
</dbReference>
<evidence type="ECO:0000250" key="1"/>
<evidence type="ECO:0000305" key="2"/>
<geneLocation type="chloroplast"/>